<name>CENPP_DANRE</name>
<keyword id="KW-0137">Centromere</keyword>
<keyword id="KW-0158">Chromosome</keyword>
<keyword id="KW-0175">Coiled coil</keyword>
<keyword id="KW-0539">Nucleus</keyword>
<keyword id="KW-1185">Reference proteome</keyword>
<reference key="1">
    <citation type="journal article" date="2013" name="Nature">
        <title>The zebrafish reference genome sequence and its relationship to the human genome.</title>
        <authorList>
            <person name="Howe K."/>
            <person name="Clark M.D."/>
            <person name="Torroja C.F."/>
            <person name="Torrance J."/>
            <person name="Berthelot C."/>
            <person name="Muffato M."/>
            <person name="Collins J.E."/>
            <person name="Humphray S."/>
            <person name="McLaren K."/>
            <person name="Matthews L."/>
            <person name="McLaren S."/>
            <person name="Sealy I."/>
            <person name="Caccamo M."/>
            <person name="Churcher C."/>
            <person name="Scott C."/>
            <person name="Barrett J.C."/>
            <person name="Koch R."/>
            <person name="Rauch G.J."/>
            <person name="White S."/>
            <person name="Chow W."/>
            <person name="Kilian B."/>
            <person name="Quintais L.T."/>
            <person name="Guerra-Assuncao J.A."/>
            <person name="Zhou Y."/>
            <person name="Gu Y."/>
            <person name="Yen J."/>
            <person name="Vogel J.H."/>
            <person name="Eyre T."/>
            <person name="Redmond S."/>
            <person name="Banerjee R."/>
            <person name="Chi J."/>
            <person name="Fu B."/>
            <person name="Langley E."/>
            <person name="Maguire S.F."/>
            <person name="Laird G.K."/>
            <person name="Lloyd D."/>
            <person name="Kenyon E."/>
            <person name="Donaldson S."/>
            <person name="Sehra H."/>
            <person name="Almeida-King J."/>
            <person name="Loveland J."/>
            <person name="Trevanion S."/>
            <person name="Jones M."/>
            <person name="Quail M."/>
            <person name="Willey D."/>
            <person name="Hunt A."/>
            <person name="Burton J."/>
            <person name="Sims S."/>
            <person name="McLay K."/>
            <person name="Plumb B."/>
            <person name="Davis J."/>
            <person name="Clee C."/>
            <person name="Oliver K."/>
            <person name="Clark R."/>
            <person name="Riddle C."/>
            <person name="Elliot D."/>
            <person name="Threadgold G."/>
            <person name="Harden G."/>
            <person name="Ware D."/>
            <person name="Begum S."/>
            <person name="Mortimore B."/>
            <person name="Kerry G."/>
            <person name="Heath P."/>
            <person name="Phillimore B."/>
            <person name="Tracey A."/>
            <person name="Corby N."/>
            <person name="Dunn M."/>
            <person name="Johnson C."/>
            <person name="Wood J."/>
            <person name="Clark S."/>
            <person name="Pelan S."/>
            <person name="Griffiths G."/>
            <person name="Smith M."/>
            <person name="Glithero R."/>
            <person name="Howden P."/>
            <person name="Barker N."/>
            <person name="Lloyd C."/>
            <person name="Stevens C."/>
            <person name="Harley J."/>
            <person name="Holt K."/>
            <person name="Panagiotidis G."/>
            <person name="Lovell J."/>
            <person name="Beasley H."/>
            <person name="Henderson C."/>
            <person name="Gordon D."/>
            <person name="Auger K."/>
            <person name="Wright D."/>
            <person name="Collins J."/>
            <person name="Raisen C."/>
            <person name="Dyer L."/>
            <person name="Leung K."/>
            <person name="Robertson L."/>
            <person name="Ambridge K."/>
            <person name="Leongamornlert D."/>
            <person name="McGuire S."/>
            <person name="Gilderthorp R."/>
            <person name="Griffiths C."/>
            <person name="Manthravadi D."/>
            <person name="Nichol S."/>
            <person name="Barker G."/>
            <person name="Whitehead S."/>
            <person name="Kay M."/>
            <person name="Brown J."/>
            <person name="Murnane C."/>
            <person name="Gray E."/>
            <person name="Humphries M."/>
            <person name="Sycamore N."/>
            <person name="Barker D."/>
            <person name="Saunders D."/>
            <person name="Wallis J."/>
            <person name="Babbage A."/>
            <person name="Hammond S."/>
            <person name="Mashreghi-Mohammadi M."/>
            <person name="Barr L."/>
            <person name="Martin S."/>
            <person name="Wray P."/>
            <person name="Ellington A."/>
            <person name="Matthews N."/>
            <person name="Ellwood M."/>
            <person name="Woodmansey R."/>
            <person name="Clark G."/>
            <person name="Cooper J."/>
            <person name="Tromans A."/>
            <person name="Grafham D."/>
            <person name="Skuce C."/>
            <person name="Pandian R."/>
            <person name="Andrews R."/>
            <person name="Harrison E."/>
            <person name="Kimberley A."/>
            <person name="Garnett J."/>
            <person name="Fosker N."/>
            <person name="Hall R."/>
            <person name="Garner P."/>
            <person name="Kelly D."/>
            <person name="Bird C."/>
            <person name="Palmer S."/>
            <person name="Gehring I."/>
            <person name="Berger A."/>
            <person name="Dooley C.M."/>
            <person name="Ersan-Urun Z."/>
            <person name="Eser C."/>
            <person name="Geiger H."/>
            <person name="Geisler M."/>
            <person name="Karotki L."/>
            <person name="Kirn A."/>
            <person name="Konantz J."/>
            <person name="Konantz M."/>
            <person name="Oberlander M."/>
            <person name="Rudolph-Geiger S."/>
            <person name="Teucke M."/>
            <person name="Lanz C."/>
            <person name="Raddatz G."/>
            <person name="Osoegawa K."/>
            <person name="Zhu B."/>
            <person name="Rapp A."/>
            <person name="Widaa S."/>
            <person name="Langford C."/>
            <person name="Yang F."/>
            <person name="Schuster S.C."/>
            <person name="Carter N.P."/>
            <person name="Harrow J."/>
            <person name="Ning Z."/>
            <person name="Herrero J."/>
            <person name="Searle S.M."/>
            <person name="Enright A."/>
            <person name="Geisler R."/>
            <person name="Plasterk R.H."/>
            <person name="Lee C."/>
            <person name="Westerfield M."/>
            <person name="de Jong P.J."/>
            <person name="Zon L.I."/>
            <person name="Postlethwait J.H."/>
            <person name="Nusslein-Volhard C."/>
            <person name="Hubbard T.J."/>
            <person name="Roest Crollius H."/>
            <person name="Rogers J."/>
            <person name="Stemple D.L."/>
        </authorList>
    </citation>
    <scope>NUCLEOTIDE SEQUENCE [LARGE SCALE GENOMIC DNA]</scope>
    <source>
        <strain>Tuebingen</strain>
    </source>
</reference>
<reference key="2">
    <citation type="submission" date="2004-07" db="EMBL/GenBank/DDBJ databases">
        <authorList>
            <consortium name="NIH - Zebrafish Gene Collection (ZGC) project"/>
        </authorList>
    </citation>
    <scope>NUCLEOTIDE SEQUENCE [LARGE SCALE MRNA]</scope>
    <source>
        <tissue>Embryo</tissue>
    </source>
</reference>
<gene>
    <name type="primary">cenpp</name>
    <name type="ORF">zgc:101125</name>
</gene>
<feature type="chain" id="PRO_0000249509" description="Centromere protein P">
    <location>
        <begin position="1"/>
        <end position="282"/>
    </location>
</feature>
<feature type="coiled-coil region" evidence="2">
    <location>
        <begin position="1"/>
        <end position="80"/>
    </location>
</feature>
<feature type="sequence conflict" description="In Ref. 2; AAH78335." evidence="3" ref="2">
    <original>AV</original>
    <variation>TL</variation>
    <location>
        <begin position="58"/>
        <end position="59"/>
    </location>
</feature>
<feature type="sequence conflict" description="In Ref. 2; AAH78335." evidence="3" ref="2">
    <original>V</original>
    <variation>I</variation>
    <location>
        <position position="100"/>
    </location>
</feature>
<feature type="sequence conflict" description="In Ref. 2; AAH78335." evidence="3" ref="2">
    <original>G</original>
    <variation>A</variation>
    <location>
        <position position="256"/>
    </location>
</feature>
<feature type="sequence conflict" description="In Ref. 2; AAH78335." evidence="3" ref="2">
    <original>A</original>
    <variation>T</variation>
    <location>
        <position position="279"/>
    </location>
</feature>
<organism>
    <name type="scientific">Danio rerio</name>
    <name type="common">Zebrafish</name>
    <name type="synonym">Brachydanio rerio</name>
    <dbReference type="NCBI Taxonomy" id="7955"/>
    <lineage>
        <taxon>Eukaryota</taxon>
        <taxon>Metazoa</taxon>
        <taxon>Chordata</taxon>
        <taxon>Craniata</taxon>
        <taxon>Vertebrata</taxon>
        <taxon>Euteleostomi</taxon>
        <taxon>Actinopterygii</taxon>
        <taxon>Neopterygii</taxon>
        <taxon>Teleostei</taxon>
        <taxon>Ostariophysi</taxon>
        <taxon>Cypriniformes</taxon>
        <taxon>Danionidae</taxon>
        <taxon>Danioninae</taxon>
        <taxon>Danio</taxon>
    </lineage>
</organism>
<proteinExistence type="evidence at transcript level"/>
<dbReference type="EMBL" id="BX908397">
    <property type="protein sequence ID" value="CAK03682.1"/>
    <property type="molecule type" value="Genomic_DNA"/>
</dbReference>
<dbReference type="EMBL" id="BX465868">
    <property type="protein sequence ID" value="CAK03682.1"/>
    <property type="status" value="JOINED"/>
    <property type="molecule type" value="Genomic_DNA"/>
</dbReference>
<dbReference type="EMBL" id="BX465868">
    <property type="protein sequence ID" value="CAK11027.1"/>
    <property type="molecule type" value="Genomic_DNA"/>
</dbReference>
<dbReference type="EMBL" id="BX908397">
    <property type="protein sequence ID" value="CAK11027.1"/>
    <property type="status" value="JOINED"/>
    <property type="molecule type" value="Genomic_DNA"/>
</dbReference>
<dbReference type="EMBL" id="BC078335">
    <property type="protein sequence ID" value="AAH78335.1"/>
    <property type="molecule type" value="mRNA"/>
</dbReference>
<dbReference type="RefSeq" id="NP_001003555.2">
    <property type="nucleotide sequence ID" value="NM_001003555.3"/>
</dbReference>
<dbReference type="SMR" id="Q1LV50"/>
<dbReference type="FunCoup" id="Q1LV50">
    <property type="interactions" value="663"/>
</dbReference>
<dbReference type="STRING" id="7955.ENSDARP00000064804"/>
<dbReference type="PaxDb" id="7955-ENSDARP00000064804"/>
<dbReference type="DNASU" id="445161"/>
<dbReference type="Ensembl" id="ENSDART00000064805">
    <property type="protein sequence ID" value="ENSDARP00000064804"/>
    <property type="gene ID" value="ENSDARG00000044135"/>
</dbReference>
<dbReference type="GeneID" id="445161"/>
<dbReference type="KEGG" id="dre:445161"/>
<dbReference type="AGR" id="ZFIN:ZDB-GENE-040801-74"/>
<dbReference type="CTD" id="401541"/>
<dbReference type="ZFIN" id="ZDB-GENE-040801-74">
    <property type="gene designation" value="cenpp"/>
</dbReference>
<dbReference type="eggNOG" id="ENOG502S17P">
    <property type="taxonomic scope" value="Eukaryota"/>
</dbReference>
<dbReference type="HOGENOM" id="CLU_084497_0_0_1"/>
<dbReference type="InParanoid" id="Q1LV50"/>
<dbReference type="OMA" id="TYAEWYE"/>
<dbReference type="OrthoDB" id="5976950at2759"/>
<dbReference type="PhylomeDB" id="Q1LV50"/>
<dbReference type="TreeFam" id="TF333784"/>
<dbReference type="PRO" id="PR:Q1LV50"/>
<dbReference type="Proteomes" id="UP000000437">
    <property type="component" value="Chromosome 22"/>
</dbReference>
<dbReference type="Bgee" id="ENSDARG00000044135">
    <property type="expression patterns" value="Expressed in mature ovarian follicle and 19 other cell types or tissues"/>
</dbReference>
<dbReference type="GO" id="GO:0000775">
    <property type="term" value="C:chromosome, centromeric region"/>
    <property type="evidence" value="ECO:0007669"/>
    <property type="project" value="UniProtKB-SubCell"/>
</dbReference>
<dbReference type="GO" id="GO:0005634">
    <property type="term" value="C:nucleus"/>
    <property type="evidence" value="ECO:0000318"/>
    <property type="project" value="GO_Central"/>
</dbReference>
<dbReference type="GO" id="GO:0034080">
    <property type="term" value="P:CENP-A containing chromatin assembly"/>
    <property type="evidence" value="ECO:0007669"/>
    <property type="project" value="InterPro"/>
</dbReference>
<dbReference type="InterPro" id="IPR027801">
    <property type="entry name" value="CENP-P"/>
</dbReference>
<dbReference type="PANTHER" id="PTHR28577">
    <property type="entry name" value="CENTROMERE PROTEIN P"/>
    <property type="match status" value="1"/>
</dbReference>
<dbReference type="PANTHER" id="PTHR28577:SF1">
    <property type="entry name" value="CENTROMERE PROTEIN P"/>
    <property type="match status" value="1"/>
</dbReference>
<dbReference type="Pfam" id="PF13096">
    <property type="entry name" value="CENP-P"/>
    <property type="match status" value="1"/>
</dbReference>
<comment type="function">
    <text evidence="1">Probable component of a centromeric complex involved in assembly of kinetochore proteins, mitotic progression and chromosome segregation.</text>
</comment>
<comment type="subcellular location">
    <subcellularLocation>
        <location evidence="1">Nucleus</location>
    </subcellularLocation>
    <subcellularLocation>
        <location evidence="1">Chromosome</location>
        <location evidence="1">Centromere</location>
    </subcellularLocation>
    <text evidence="1">Localizes exclusively in the centromeres.</text>
</comment>
<comment type="similarity">
    <text evidence="3">Belongs to the CENP-P/CTF19 family.</text>
</comment>
<sequence length="282" mass="32534">MEQKYEEDIQKLQQEIEMLEAEQEETLRSIFVQHGDRLQQGVKSACEERGGGGAQQHAVSKLITEVRELEKDLRRQTEINGITLNECFVKTLHKSERKLVQQLRLAGHCGLLLFQVEFAVTEIQEDNVLHRRVTELNIVVDGVEFKDFSAFVSRVEDTKDLLLFFRTLRTFSERCEDRRQTFQHFQEKYPDVVNLPEGCRSEIMIIRSPQLPGISMTLFWKIHVSKEGVVKPLLDLLLKMPDQALELDTKKVMEKGSDYFQSLLQLLGVEASIEGLIRAVCS</sequence>
<evidence type="ECO:0000250" key="1"/>
<evidence type="ECO:0000255" key="2"/>
<evidence type="ECO:0000305" key="3"/>
<protein>
    <recommendedName>
        <fullName>Centromere protein P</fullName>
        <shortName>CENP-P</shortName>
    </recommendedName>
</protein>
<accession>Q1LV50</accession>
<accession>Q6DBW4</accession>